<evidence type="ECO:0000255" key="1">
    <source>
        <dbReference type="HAMAP-Rule" id="MF_00375"/>
    </source>
</evidence>
<reference key="1">
    <citation type="journal article" date="2005" name="J. Bacteriol.">
        <title>Whole-genome sequencing of Staphylococcus haemolyticus uncovers the extreme plasticity of its genome and the evolution of human-colonizing staphylococcal species.</title>
        <authorList>
            <person name="Takeuchi F."/>
            <person name="Watanabe S."/>
            <person name="Baba T."/>
            <person name="Yuzawa H."/>
            <person name="Ito T."/>
            <person name="Morimoto Y."/>
            <person name="Kuroda M."/>
            <person name="Cui L."/>
            <person name="Takahashi M."/>
            <person name="Ankai A."/>
            <person name="Baba S."/>
            <person name="Fukui S."/>
            <person name="Lee J.C."/>
            <person name="Hiramatsu K."/>
        </authorList>
    </citation>
    <scope>NUCLEOTIDE SEQUENCE [LARGE SCALE GENOMIC DNA]</scope>
    <source>
        <strain>JCSC1435</strain>
    </source>
</reference>
<feature type="chain" id="PRO_0000243623" description="Glutamate-1-semialdehyde 2,1-aminomutase 2">
    <location>
        <begin position="1"/>
        <end position="427"/>
    </location>
</feature>
<feature type="modified residue" description="N6-(pyridoxal phosphate)lysine" evidence="1">
    <location>
        <position position="267"/>
    </location>
</feature>
<dbReference type="EC" id="5.4.3.8" evidence="1"/>
<dbReference type="EMBL" id="AP006716">
    <property type="protein sequence ID" value="BAE04569.1"/>
    <property type="molecule type" value="Genomic_DNA"/>
</dbReference>
<dbReference type="SMR" id="Q4L706"/>
<dbReference type="KEGG" id="sha:SH1260"/>
<dbReference type="eggNOG" id="COG0001">
    <property type="taxonomic scope" value="Bacteria"/>
</dbReference>
<dbReference type="HOGENOM" id="CLU_016922_1_5_9"/>
<dbReference type="OrthoDB" id="9807885at2"/>
<dbReference type="UniPathway" id="UPA00251">
    <property type="reaction ID" value="UER00317"/>
</dbReference>
<dbReference type="Proteomes" id="UP000000543">
    <property type="component" value="Chromosome"/>
</dbReference>
<dbReference type="GO" id="GO:0005737">
    <property type="term" value="C:cytoplasm"/>
    <property type="evidence" value="ECO:0007669"/>
    <property type="project" value="UniProtKB-SubCell"/>
</dbReference>
<dbReference type="GO" id="GO:0042286">
    <property type="term" value="F:glutamate-1-semialdehyde 2,1-aminomutase activity"/>
    <property type="evidence" value="ECO:0007669"/>
    <property type="project" value="UniProtKB-UniRule"/>
</dbReference>
<dbReference type="GO" id="GO:0030170">
    <property type="term" value="F:pyridoxal phosphate binding"/>
    <property type="evidence" value="ECO:0007669"/>
    <property type="project" value="InterPro"/>
</dbReference>
<dbReference type="GO" id="GO:0008483">
    <property type="term" value="F:transaminase activity"/>
    <property type="evidence" value="ECO:0007669"/>
    <property type="project" value="InterPro"/>
</dbReference>
<dbReference type="GO" id="GO:0006782">
    <property type="term" value="P:protoporphyrinogen IX biosynthetic process"/>
    <property type="evidence" value="ECO:0007669"/>
    <property type="project" value="UniProtKB-UniRule"/>
</dbReference>
<dbReference type="CDD" id="cd00610">
    <property type="entry name" value="OAT_like"/>
    <property type="match status" value="1"/>
</dbReference>
<dbReference type="FunFam" id="3.40.640.10:FF:000021">
    <property type="entry name" value="Glutamate-1-semialdehyde 2,1-aminomutase"/>
    <property type="match status" value="1"/>
</dbReference>
<dbReference type="Gene3D" id="3.90.1150.10">
    <property type="entry name" value="Aspartate Aminotransferase, domain 1"/>
    <property type="match status" value="1"/>
</dbReference>
<dbReference type="Gene3D" id="3.40.640.10">
    <property type="entry name" value="Type I PLP-dependent aspartate aminotransferase-like (Major domain)"/>
    <property type="match status" value="1"/>
</dbReference>
<dbReference type="HAMAP" id="MF_00375">
    <property type="entry name" value="HemL_aminotrans_3"/>
    <property type="match status" value="1"/>
</dbReference>
<dbReference type="InterPro" id="IPR004639">
    <property type="entry name" value="4pyrrol_synth_GluAld_NH2Trfase"/>
</dbReference>
<dbReference type="InterPro" id="IPR005814">
    <property type="entry name" value="Aminotrans_3"/>
</dbReference>
<dbReference type="InterPro" id="IPR049704">
    <property type="entry name" value="Aminotrans_3_PPA_site"/>
</dbReference>
<dbReference type="InterPro" id="IPR015424">
    <property type="entry name" value="PyrdxlP-dep_Trfase"/>
</dbReference>
<dbReference type="InterPro" id="IPR015421">
    <property type="entry name" value="PyrdxlP-dep_Trfase_major"/>
</dbReference>
<dbReference type="InterPro" id="IPR015422">
    <property type="entry name" value="PyrdxlP-dep_Trfase_small"/>
</dbReference>
<dbReference type="NCBIfam" id="TIGR00713">
    <property type="entry name" value="hemL"/>
    <property type="match status" value="1"/>
</dbReference>
<dbReference type="NCBIfam" id="NF000818">
    <property type="entry name" value="PRK00062.1"/>
    <property type="match status" value="1"/>
</dbReference>
<dbReference type="PANTHER" id="PTHR43713">
    <property type="entry name" value="GLUTAMATE-1-SEMIALDEHYDE 2,1-AMINOMUTASE"/>
    <property type="match status" value="1"/>
</dbReference>
<dbReference type="PANTHER" id="PTHR43713:SF3">
    <property type="entry name" value="GLUTAMATE-1-SEMIALDEHYDE 2,1-AMINOMUTASE 1, CHLOROPLASTIC-RELATED"/>
    <property type="match status" value="1"/>
</dbReference>
<dbReference type="Pfam" id="PF00202">
    <property type="entry name" value="Aminotran_3"/>
    <property type="match status" value="1"/>
</dbReference>
<dbReference type="SUPFAM" id="SSF53383">
    <property type="entry name" value="PLP-dependent transferases"/>
    <property type="match status" value="1"/>
</dbReference>
<dbReference type="PROSITE" id="PS00600">
    <property type="entry name" value="AA_TRANSFER_CLASS_3"/>
    <property type="match status" value="1"/>
</dbReference>
<sequence length="427" mass="46278">MGYEKSIEAMKIAENLMPGGVNSPVRAFKSVDTPAIFMDHAKGSRIYDIDGNEYIDYVLSWGPLILGHKNEQVIKKLHEAVNRGTSFGASTLEENKLAELVIERVPSIEKVRMVSSGTEATLAALRLARGYTGRNKIIKFEGCYHGHSDSLLIKAGSGVATLGLPDSPGVPEGTAKNTITVPYNDLEAIKIAFENYGDDIAGIIVEPVAGNMGVVPPKDGFLQGLREITNDYGALLIFDEVMTGFRVGYNCAQGYFGVTPDLTCLGKVIGGGLPVGAFGGRKEIMDKVAPVGNIYQAGTLSGNPLAMTSGYETLSQLTPESYEYFQELGDILEEGLKKVFSKHNVPITINRAGSMIGYFLNEGPVTNFEEANKSNLELFSQMYREMAKEGVFLPPSQFEGTFLSTAHSKEDIEKTIQAFDTALSRIV</sequence>
<organism>
    <name type="scientific">Staphylococcus haemolyticus (strain JCSC1435)</name>
    <dbReference type="NCBI Taxonomy" id="279808"/>
    <lineage>
        <taxon>Bacteria</taxon>
        <taxon>Bacillati</taxon>
        <taxon>Bacillota</taxon>
        <taxon>Bacilli</taxon>
        <taxon>Bacillales</taxon>
        <taxon>Staphylococcaceae</taxon>
        <taxon>Staphylococcus</taxon>
    </lineage>
</organism>
<comment type="catalytic activity">
    <reaction evidence="1">
        <text>(S)-4-amino-5-oxopentanoate = 5-aminolevulinate</text>
        <dbReference type="Rhea" id="RHEA:14265"/>
        <dbReference type="ChEBI" id="CHEBI:57501"/>
        <dbReference type="ChEBI" id="CHEBI:356416"/>
        <dbReference type="EC" id="5.4.3.8"/>
    </reaction>
</comment>
<comment type="cofactor">
    <cofactor evidence="1">
        <name>pyridoxal 5'-phosphate</name>
        <dbReference type="ChEBI" id="CHEBI:597326"/>
    </cofactor>
</comment>
<comment type="pathway">
    <text evidence="1">Porphyrin-containing compound metabolism; protoporphyrin-IX biosynthesis; 5-aminolevulinate from L-glutamyl-tRNA(Glu): step 2/2.</text>
</comment>
<comment type="subunit">
    <text evidence="1">Homodimer.</text>
</comment>
<comment type="subcellular location">
    <subcellularLocation>
        <location evidence="1">Cytoplasm</location>
    </subcellularLocation>
</comment>
<comment type="similarity">
    <text evidence="1">Belongs to the class-III pyridoxal-phosphate-dependent aminotransferase family. HemL subfamily.</text>
</comment>
<protein>
    <recommendedName>
        <fullName evidence="1">Glutamate-1-semialdehyde 2,1-aminomutase 2</fullName>
        <shortName evidence="1">GSA 2</shortName>
        <ecNumber evidence="1">5.4.3.8</ecNumber>
    </recommendedName>
    <alternativeName>
        <fullName evidence="1">Glutamate-1-semialdehyde aminotransferase 2</fullName>
        <shortName evidence="1">GSA-AT 2</shortName>
    </alternativeName>
</protein>
<accession>Q4L706</accession>
<proteinExistence type="inferred from homology"/>
<keyword id="KW-0963">Cytoplasm</keyword>
<keyword id="KW-0413">Isomerase</keyword>
<keyword id="KW-0627">Porphyrin biosynthesis</keyword>
<keyword id="KW-0663">Pyridoxal phosphate</keyword>
<name>GSA2_STAHJ</name>
<gene>
    <name evidence="1" type="primary">hemL2</name>
    <name type="ordered locus">SH1260</name>
</gene>